<feature type="chain" id="PRO_1000069154" description="Proline--tRNA ligase">
    <location>
        <begin position="1"/>
        <end position="571"/>
    </location>
</feature>
<comment type="function">
    <text evidence="1">Catalyzes the attachment of proline to tRNA(Pro) in a two-step reaction: proline is first activated by ATP to form Pro-AMP and then transferred to the acceptor end of tRNA(Pro). As ProRS can inadvertently accommodate and process non-cognate amino acids such as alanine and cysteine, to avoid such errors it has two additional distinct editing activities against alanine. One activity is designated as 'pretransfer' editing and involves the tRNA(Pro)-independent hydrolysis of activated Ala-AMP. The other activity is designated 'posttransfer' editing and involves deacylation of mischarged Ala-tRNA(Pro). The misacylated Cys-tRNA(Pro) is not edited by ProRS.</text>
</comment>
<comment type="catalytic activity">
    <reaction evidence="1">
        <text>tRNA(Pro) + L-proline + ATP = L-prolyl-tRNA(Pro) + AMP + diphosphate</text>
        <dbReference type="Rhea" id="RHEA:14305"/>
        <dbReference type="Rhea" id="RHEA-COMP:9700"/>
        <dbReference type="Rhea" id="RHEA-COMP:9702"/>
        <dbReference type="ChEBI" id="CHEBI:30616"/>
        <dbReference type="ChEBI" id="CHEBI:33019"/>
        <dbReference type="ChEBI" id="CHEBI:60039"/>
        <dbReference type="ChEBI" id="CHEBI:78442"/>
        <dbReference type="ChEBI" id="CHEBI:78532"/>
        <dbReference type="ChEBI" id="CHEBI:456215"/>
        <dbReference type="EC" id="6.1.1.15"/>
    </reaction>
</comment>
<comment type="subunit">
    <text evidence="1">Homodimer.</text>
</comment>
<comment type="subcellular location">
    <subcellularLocation>
        <location evidence="1">Cytoplasm</location>
    </subcellularLocation>
</comment>
<comment type="domain">
    <text evidence="1">Consists of three domains: the N-terminal catalytic domain, the editing domain and the C-terminal anticodon-binding domain.</text>
</comment>
<comment type="similarity">
    <text evidence="1">Belongs to the class-II aminoacyl-tRNA synthetase family. ProS type 1 subfamily.</text>
</comment>
<evidence type="ECO:0000255" key="1">
    <source>
        <dbReference type="HAMAP-Rule" id="MF_01569"/>
    </source>
</evidence>
<proteinExistence type="inferred from homology"/>
<name>SYP_PSEP7</name>
<accession>A6VA16</accession>
<sequence length="571" mass="63057">MRTSQYLLSTLKETPADAVVISHQLLLRAGMIRRLASGLYTWLPMGLRVLRKVETVVREEMNAAGALEVLMPAVQPAELWQESGRWEQYGPELLRLKDRHEREFCVGPTHEEVITDLARNELNSYKQLPINFYQIQTKFRDEIRPRFGLMRGREFIMKDAYSFHLNQESLQATYDGMYQAYSKIFTRLGLDFRPVQADNGSIGGSGSHEFHVLANSGEDDIVFSDSSDYAANIEKAEAVPRESARGAASEDMRLVDTPDTKTIAALVDGFGLPIEKTIKTLVVHGAEEGTLVALIVRGDHELNEIKAANQPLVASPLVFASEAEIRAAIGAGPGSLGPVNLPIACIVDRSVALMSDFAAGANIEDKHYFGVNWERDLPLPEVADLRNVVEGDPSPDGKGTLVIKRGIEVGHIFQLGTKYSEAMKLSVLSEQGKPVNLIMGCYGIGVSRVVAAAIEQNHDERGILWPSALAPFQIALVPLKYETESVRQATDRLYAELTAAGFEVLLDDRDKKTSPGVKFADMELLGIPHRIVVSDRGLNEGVLEYKGRRDSESQNLPIGELMSFITEKLSR</sequence>
<keyword id="KW-0030">Aminoacyl-tRNA synthetase</keyword>
<keyword id="KW-0067">ATP-binding</keyword>
<keyword id="KW-0963">Cytoplasm</keyword>
<keyword id="KW-0436">Ligase</keyword>
<keyword id="KW-0547">Nucleotide-binding</keyword>
<keyword id="KW-0648">Protein biosynthesis</keyword>
<reference key="1">
    <citation type="submission" date="2007-06" db="EMBL/GenBank/DDBJ databases">
        <authorList>
            <person name="Dodson R.J."/>
            <person name="Harkins D."/>
            <person name="Paulsen I.T."/>
        </authorList>
    </citation>
    <scope>NUCLEOTIDE SEQUENCE [LARGE SCALE GENOMIC DNA]</scope>
    <source>
        <strain>DSM 24068 / PA7</strain>
    </source>
</reference>
<organism>
    <name type="scientific">Pseudomonas paraeruginosa (strain DSM 24068 / PA7)</name>
    <name type="common">Pseudomonas aeruginosa (strain PA7)</name>
    <dbReference type="NCBI Taxonomy" id="381754"/>
    <lineage>
        <taxon>Bacteria</taxon>
        <taxon>Pseudomonadati</taxon>
        <taxon>Pseudomonadota</taxon>
        <taxon>Gammaproteobacteria</taxon>
        <taxon>Pseudomonadales</taxon>
        <taxon>Pseudomonadaceae</taxon>
        <taxon>Pseudomonas</taxon>
        <taxon>Pseudomonas paraeruginosa</taxon>
    </lineage>
</organism>
<dbReference type="EC" id="6.1.1.15" evidence="1"/>
<dbReference type="EMBL" id="CP000744">
    <property type="protein sequence ID" value="ABR81676.1"/>
    <property type="molecule type" value="Genomic_DNA"/>
</dbReference>
<dbReference type="RefSeq" id="WP_003155969.1">
    <property type="nucleotide sequence ID" value="NC_009656.1"/>
</dbReference>
<dbReference type="SMR" id="A6VA16"/>
<dbReference type="GeneID" id="77222460"/>
<dbReference type="KEGG" id="pap:PSPA7_4552"/>
<dbReference type="HOGENOM" id="CLU_016739_0_0_6"/>
<dbReference type="Proteomes" id="UP000001582">
    <property type="component" value="Chromosome"/>
</dbReference>
<dbReference type="GO" id="GO:0005829">
    <property type="term" value="C:cytosol"/>
    <property type="evidence" value="ECO:0007669"/>
    <property type="project" value="TreeGrafter"/>
</dbReference>
<dbReference type="GO" id="GO:0002161">
    <property type="term" value="F:aminoacyl-tRNA deacylase activity"/>
    <property type="evidence" value="ECO:0007669"/>
    <property type="project" value="InterPro"/>
</dbReference>
<dbReference type="GO" id="GO:0005524">
    <property type="term" value="F:ATP binding"/>
    <property type="evidence" value="ECO:0007669"/>
    <property type="project" value="UniProtKB-UniRule"/>
</dbReference>
<dbReference type="GO" id="GO:0004827">
    <property type="term" value="F:proline-tRNA ligase activity"/>
    <property type="evidence" value="ECO:0007669"/>
    <property type="project" value="UniProtKB-UniRule"/>
</dbReference>
<dbReference type="GO" id="GO:0006433">
    <property type="term" value="P:prolyl-tRNA aminoacylation"/>
    <property type="evidence" value="ECO:0007669"/>
    <property type="project" value="UniProtKB-UniRule"/>
</dbReference>
<dbReference type="CDD" id="cd04334">
    <property type="entry name" value="ProRS-INS"/>
    <property type="match status" value="1"/>
</dbReference>
<dbReference type="CDD" id="cd00861">
    <property type="entry name" value="ProRS_anticodon_short"/>
    <property type="match status" value="1"/>
</dbReference>
<dbReference type="CDD" id="cd00779">
    <property type="entry name" value="ProRS_core_prok"/>
    <property type="match status" value="1"/>
</dbReference>
<dbReference type="FunFam" id="3.30.930.10:FF:000012">
    <property type="entry name" value="Proline--tRNA ligase"/>
    <property type="match status" value="1"/>
</dbReference>
<dbReference type="FunFam" id="3.30.930.10:FF:000097">
    <property type="entry name" value="Proline--tRNA ligase"/>
    <property type="match status" value="1"/>
</dbReference>
<dbReference type="FunFam" id="3.40.50.800:FF:000006">
    <property type="entry name" value="Proline--tRNA ligase"/>
    <property type="match status" value="1"/>
</dbReference>
<dbReference type="FunFam" id="3.90.960.10:FF:000001">
    <property type="entry name" value="Proline--tRNA ligase"/>
    <property type="match status" value="1"/>
</dbReference>
<dbReference type="Gene3D" id="3.40.50.800">
    <property type="entry name" value="Anticodon-binding domain"/>
    <property type="match status" value="1"/>
</dbReference>
<dbReference type="Gene3D" id="3.30.930.10">
    <property type="entry name" value="Bira Bifunctional Protein, Domain 2"/>
    <property type="match status" value="2"/>
</dbReference>
<dbReference type="Gene3D" id="3.90.960.10">
    <property type="entry name" value="YbaK/aminoacyl-tRNA synthetase-associated domain"/>
    <property type="match status" value="1"/>
</dbReference>
<dbReference type="HAMAP" id="MF_01569">
    <property type="entry name" value="Pro_tRNA_synth_type1"/>
    <property type="match status" value="1"/>
</dbReference>
<dbReference type="InterPro" id="IPR002314">
    <property type="entry name" value="aa-tRNA-synt_IIb"/>
</dbReference>
<dbReference type="InterPro" id="IPR006195">
    <property type="entry name" value="aa-tRNA-synth_II"/>
</dbReference>
<dbReference type="InterPro" id="IPR045864">
    <property type="entry name" value="aa-tRNA-synth_II/BPL/LPL"/>
</dbReference>
<dbReference type="InterPro" id="IPR004154">
    <property type="entry name" value="Anticodon-bd"/>
</dbReference>
<dbReference type="InterPro" id="IPR036621">
    <property type="entry name" value="Anticodon-bd_dom_sf"/>
</dbReference>
<dbReference type="InterPro" id="IPR002316">
    <property type="entry name" value="Pro-tRNA-ligase_IIa"/>
</dbReference>
<dbReference type="InterPro" id="IPR004500">
    <property type="entry name" value="Pro-tRNA-synth_IIa_bac-type"/>
</dbReference>
<dbReference type="InterPro" id="IPR023717">
    <property type="entry name" value="Pro-tRNA-Synthase_IIa_type1"/>
</dbReference>
<dbReference type="InterPro" id="IPR050062">
    <property type="entry name" value="Pro-tRNA_synthetase"/>
</dbReference>
<dbReference type="InterPro" id="IPR044140">
    <property type="entry name" value="ProRS_anticodon_short"/>
</dbReference>
<dbReference type="InterPro" id="IPR033730">
    <property type="entry name" value="ProRS_core_prok"/>
</dbReference>
<dbReference type="InterPro" id="IPR036754">
    <property type="entry name" value="YbaK/aa-tRNA-synt-asso_dom_sf"/>
</dbReference>
<dbReference type="InterPro" id="IPR007214">
    <property type="entry name" value="YbaK/aa-tRNA-synth-assoc-dom"/>
</dbReference>
<dbReference type="NCBIfam" id="NF006625">
    <property type="entry name" value="PRK09194.1"/>
    <property type="match status" value="1"/>
</dbReference>
<dbReference type="NCBIfam" id="TIGR00409">
    <property type="entry name" value="proS_fam_II"/>
    <property type="match status" value="1"/>
</dbReference>
<dbReference type="PANTHER" id="PTHR42753">
    <property type="entry name" value="MITOCHONDRIAL RIBOSOME PROTEIN L39/PROLYL-TRNA LIGASE FAMILY MEMBER"/>
    <property type="match status" value="1"/>
</dbReference>
<dbReference type="PANTHER" id="PTHR42753:SF2">
    <property type="entry name" value="PROLINE--TRNA LIGASE"/>
    <property type="match status" value="1"/>
</dbReference>
<dbReference type="Pfam" id="PF03129">
    <property type="entry name" value="HGTP_anticodon"/>
    <property type="match status" value="1"/>
</dbReference>
<dbReference type="Pfam" id="PF00587">
    <property type="entry name" value="tRNA-synt_2b"/>
    <property type="match status" value="1"/>
</dbReference>
<dbReference type="Pfam" id="PF04073">
    <property type="entry name" value="tRNA_edit"/>
    <property type="match status" value="1"/>
</dbReference>
<dbReference type="PIRSF" id="PIRSF001535">
    <property type="entry name" value="ProRS_1"/>
    <property type="match status" value="1"/>
</dbReference>
<dbReference type="PRINTS" id="PR01046">
    <property type="entry name" value="TRNASYNTHPRO"/>
</dbReference>
<dbReference type="SUPFAM" id="SSF52954">
    <property type="entry name" value="Class II aaRS ABD-related"/>
    <property type="match status" value="1"/>
</dbReference>
<dbReference type="SUPFAM" id="SSF55681">
    <property type="entry name" value="Class II aaRS and biotin synthetases"/>
    <property type="match status" value="1"/>
</dbReference>
<dbReference type="SUPFAM" id="SSF55826">
    <property type="entry name" value="YbaK/ProRS associated domain"/>
    <property type="match status" value="1"/>
</dbReference>
<dbReference type="PROSITE" id="PS50862">
    <property type="entry name" value="AA_TRNA_LIGASE_II"/>
    <property type="match status" value="1"/>
</dbReference>
<gene>
    <name evidence="1" type="primary">proS</name>
    <name type="ordered locus">PSPA7_4552</name>
</gene>
<protein>
    <recommendedName>
        <fullName evidence="1">Proline--tRNA ligase</fullName>
        <ecNumber evidence="1">6.1.1.15</ecNumber>
    </recommendedName>
    <alternativeName>
        <fullName evidence="1">Prolyl-tRNA synthetase</fullName>
        <shortName evidence="1">ProRS</shortName>
    </alternativeName>
</protein>